<protein>
    <recommendedName>
        <fullName evidence="2">ATP synthase subunit c</fullName>
    </recommendedName>
    <alternativeName>
        <fullName evidence="2">ATP synthase F(0) sector subunit c</fullName>
    </alternativeName>
    <alternativeName>
        <fullName evidence="2">F-type ATPase subunit c</fullName>
        <shortName evidence="2">F-ATPase subunit c</shortName>
    </alternativeName>
    <alternativeName>
        <fullName evidence="2">Lipid-binding protein</fullName>
    </alternativeName>
</protein>
<comment type="function">
    <text evidence="2">F(1)F(0) ATP synthase produces ATP from ADP in the presence of a proton or sodium gradient. F-type ATPases consist of two structural domains, F(1) containing the extramembraneous catalytic core and F(0) containing the membrane proton channel, linked together by a central stalk and a peripheral stalk. During catalysis, ATP synthesis in the catalytic domain of F(1) is coupled via a rotary mechanism of the central stalk subunits to proton translocation.</text>
</comment>
<comment type="function">
    <text evidence="2">Key component of the F(0) channel; it plays a direct role in translocation across the membrane. A homomeric c-ring of between 10-14 subunits forms the central stalk rotor element with the F(1) delta and epsilon subunits.</text>
</comment>
<comment type="subunit">
    <text evidence="2">F-type ATPases have 2 components, F(1) - the catalytic core - and F(0) - the membrane proton channel. F(1) has five subunits: alpha(3), beta(3), gamma(1), delta(1), epsilon(1). F(0) has three main subunits: a(1), b(2) and c(10-14). The alpha and beta chains form an alternating ring which encloses part of the gamma chain. F(1) is attached to F(0) by a central stalk formed by the gamma and epsilon chains, while a peripheral stalk is formed by the delta and b chains.</text>
</comment>
<comment type="subcellular location">
    <subcellularLocation>
        <location evidence="2">Cell inner membrane</location>
        <topology evidence="2">Multi-pass membrane protein</topology>
    </subcellularLocation>
</comment>
<comment type="miscellaneous">
    <text evidence="1">Dicyclohexylcarbodiimide (DCDD) binding to the active aspartate residue inhibits ATPase in vitro.</text>
</comment>
<comment type="similarity">
    <text evidence="2">Belongs to the ATPase C chain family.</text>
</comment>
<name>ATPL_SALTY</name>
<feature type="chain" id="PRO_0000112163" description="ATP synthase subunit c">
    <location>
        <begin position="1"/>
        <end position="79"/>
    </location>
</feature>
<feature type="transmembrane region" description="Helical" evidence="2">
    <location>
        <begin position="11"/>
        <end position="31"/>
    </location>
</feature>
<feature type="transmembrane region" description="Helical" evidence="2">
    <location>
        <begin position="53"/>
        <end position="73"/>
    </location>
</feature>
<feature type="site" description="Reversibly protonated during proton transport" evidence="2">
    <location>
        <position position="61"/>
    </location>
</feature>
<feature type="modified residue" description="N-formylmethionine" evidence="1">
    <location>
        <position position="1"/>
    </location>
</feature>
<evidence type="ECO:0000250" key="1"/>
<evidence type="ECO:0000255" key="2">
    <source>
        <dbReference type="HAMAP-Rule" id="MF_01396"/>
    </source>
</evidence>
<proteinExistence type="inferred from homology"/>
<reference key="1">
    <citation type="submission" date="1999-09" db="EMBL/GenBank/DDBJ databases">
        <title>Molecular structure of nonacistronic atp genes encoding ATP synthase in Salmonella typhimurium.</title>
        <authorList>
            <person name="Kim H.-K."/>
            <person name="Heo N.-J."/>
            <person name="Ghim S.-Y."/>
            <person name="Song B.-H."/>
        </authorList>
    </citation>
    <scope>NUCLEOTIDE SEQUENCE [GENOMIC DNA]</scope>
    <source>
        <strain>TA98</strain>
    </source>
</reference>
<reference key="2">
    <citation type="journal article" date="2001" name="Nature">
        <title>Complete genome sequence of Salmonella enterica serovar Typhimurium LT2.</title>
        <authorList>
            <person name="McClelland M."/>
            <person name="Sanderson K.E."/>
            <person name="Spieth J."/>
            <person name="Clifton S.W."/>
            <person name="Latreille P."/>
            <person name="Courtney L."/>
            <person name="Porwollik S."/>
            <person name="Ali J."/>
            <person name="Dante M."/>
            <person name="Du F."/>
            <person name="Hou S."/>
            <person name="Layman D."/>
            <person name="Leonard S."/>
            <person name="Nguyen C."/>
            <person name="Scott K."/>
            <person name="Holmes A."/>
            <person name="Grewal N."/>
            <person name="Mulvaney E."/>
            <person name="Ryan E."/>
            <person name="Sun H."/>
            <person name="Florea L."/>
            <person name="Miller W."/>
            <person name="Stoneking T."/>
            <person name="Nhan M."/>
            <person name="Waterston R."/>
            <person name="Wilson R.K."/>
        </authorList>
    </citation>
    <scope>NUCLEOTIDE SEQUENCE [LARGE SCALE GENOMIC DNA]</scope>
    <source>
        <strain>LT2 / SGSC1412 / ATCC 700720</strain>
    </source>
</reference>
<keyword id="KW-0066">ATP synthesis</keyword>
<keyword id="KW-0997">Cell inner membrane</keyword>
<keyword id="KW-1003">Cell membrane</keyword>
<keyword id="KW-0138">CF(0)</keyword>
<keyword id="KW-0291">Formylation</keyword>
<keyword id="KW-0375">Hydrogen ion transport</keyword>
<keyword id="KW-0406">Ion transport</keyword>
<keyword id="KW-0446">Lipid-binding</keyword>
<keyword id="KW-0472">Membrane</keyword>
<keyword id="KW-1185">Reference proteome</keyword>
<keyword id="KW-0812">Transmembrane</keyword>
<keyword id="KW-1133">Transmembrane helix</keyword>
<keyword id="KW-0813">Transport</keyword>
<accession>P68704</accession>
<accession>P00844</accession>
<dbReference type="EMBL" id="AF188265">
    <property type="protein sequence ID" value="AAF19357.1"/>
    <property type="molecule type" value="mRNA"/>
</dbReference>
<dbReference type="EMBL" id="AE006468">
    <property type="protein sequence ID" value="AAL22728.1"/>
    <property type="molecule type" value="Genomic_DNA"/>
</dbReference>
<dbReference type="RefSeq" id="NP_462769.1">
    <property type="nucleotide sequence ID" value="NC_003197.2"/>
</dbReference>
<dbReference type="RefSeq" id="WP_000429386.1">
    <property type="nucleotide sequence ID" value="NC_003197.2"/>
</dbReference>
<dbReference type="SMR" id="P68704"/>
<dbReference type="STRING" id="99287.STM3870"/>
<dbReference type="PaxDb" id="99287-STM3870"/>
<dbReference type="GeneID" id="1255397"/>
<dbReference type="GeneID" id="98390858"/>
<dbReference type="KEGG" id="stm:STM3870"/>
<dbReference type="PATRIC" id="fig|99287.12.peg.4099"/>
<dbReference type="HOGENOM" id="CLU_148047_1_0_6"/>
<dbReference type="OMA" id="RTQMFIV"/>
<dbReference type="PhylomeDB" id="P68704"/>
<dbReference type="BioCyc" id="SENT99287:STM3870-MONOMER"/>
<dbReference type="PRO" id="PR:P68704"/>
<dbReference type="Proteomes" id="UP000001014">
    <property type="component" value="Chromosome"/>
</dbReference>
<dbReference type="GO" id="GO:0005886">
    <property type="term" value="C:plasma membrane"/>
    <property type="evidence" value="ECO:0007669"/>
    <property type="project" value="UniProtKB-SubCell"/>
</dbReference>
<dbReference type="GO" id="GO:0045259">
    <property type="term" value="C:proton-transporting ATP synthase complex"/>
    <property type="evidence" value="ECO:0007669"/>
    <property type="project" value="UniProtKB-KW"/>
</dbReference>
<dbReference type="GO" id="GO:0033177">
    <property type="term" value="C:proton-transporting two-sector ATPase complex, proton-transporting domain"/>
    <property type="evidence" value="ECO:0007669"/>
    <property type="project" value="InterPro"/>
</dbReference>
<dbReference type="GO" id="GO:0008289">
    <property type="term" value="F:lipid binding"/>
    <property type="evidence" value="ECO:0007669"/>
    <property type="project" value="UniProtKB-KW"/>
</dbReference>
<dbReference type="GO" id="GO:0046933">
    <property type="term" value="F:proton-transporting ATP synthase activity, rotational mechanism"/>
    <property type="evidence" value="ECO:0007669"/>
    <property type="project" value="UniProtKB-UniRule"/>
</dbReference>
<dbReference type="GO" id="GO:0015986">
    <property type="term" value="P:proton motive force-driven ATP synthesis"/>
    <property type="evidence" value="ECO:0000318"/>
    <property type="project" value="GO_Central"/>
</dbReference>
<dbReference type="CDD" id="cd18185">
    <property type="entry name" value="ATP-synt_Fo_c_ATPE"/>
    <property type="match status" value="1"/>
</dbReference>
<dbReference type="FunFam" id="1.20.20.10:FF:000002">
    <property type="entry name" value="ATP synthase subunit c"/>
    <property type="match status" value="1"/>
</dbReference>
<dbReference type="Gene3D" id="1.20.20.10">
    <property type="entry name" value="F1F0 ATP synthase subunit C"/>
    <property type="match status" value="1"/>
</dbReference>
<dbReference type="HAMAP" id="MF_01396">
    <property type="entry name" value="ATP_synth_c_bact"/>
    <property type="match status" value="1"/>
</dbReference>
<dbReference type="InterPro" id="IPR005953">
    <property type="entry name" value="ATP_synth_csu_bac/chlpt"/>
</dbReference>
<dbReference type="InterPro" id="IPR000454">
    <property type="entry name" value="ATP_synth_F0_csu"/>
</dbReference>
<dbReference type="InterPro" id="IPR020537">
    <property type="entry name" value="ATP_synth_F0_csu_DDCD_BS"/>
</dbReference>
<dbReference type="InterPro" id="IPR038662">
    <property type="entry name" value="ATP_synth_F0_csu_sf"/>
</dbReference>
<dbReference type="InterPro" id="IPR002379">
    <property type="entry name" value="ATPase_proteolipid_c-like_dom"/>
</dbReference>
<dbReference type="InterPro" id="IPR035921">
    <property type="entry name" value="F/V-ATP_Csub_sf"/>
</dbReference>
<dbReference type="NCBIfam" id="TIGR01260">
    <property type="entry name" value="ATP_synt_c"/>
    <property type="match status" value="1"/>
</dbReference>
<dbReference type="NCBIfam" id="NF005363">
    <property type="entry name" value="PRK06876.1"/>
    <property type="match status" value="1"/>
</dbReference>
<dbReference type="Pfam" id="PF00137">
    <property type="entry name" value="ATP-synt_C"/>
    <property type="match status" value="1"/>
</dbReference>
<dbReference type="PRINTS" id="PR00124">
    <property type="entry name" value="ATPASEC"/>
</dbReference>
<dbReference type="SUPFAM" id="SSF81333">
    <property type="entry name" value="F1F0 ATP synthase subunit C"/>
    <property type="match status" value="1"/>
</dbReference>
<dbReference type="PROSITE" id="PS00605">
    <property type="entry name" value="ATPASE_C"/>
    <property type="match status" value="1"/>
</dbReference>
<gene>
    <name evidence="2" type="primary">atpE</name>
    <name type="ordered locus">STM3870</name>
</gene>
<organism>
    <name type="scientific">Salmonella typhimurium (strain LT2 / SGSC1412 / ATCC 700720)</name>
    <dbReference type="NCBI Taxonomy" id="99287"/>
    <lineage>
        <taxon>Bacteria</taxon>
        <taxon>Pseudomonadati</taxon>
        <taxon>Pseudomonadota</taxon>
        <taxon>Gammaproteobacteria</taxon>
        <taxon>Enterobacterales</taxon>
        <taxon>Enterobacteriaceae</taxon>
        <taxon>Salmonella</taxon>
    </lineage>
</organism>
<sequence length="79" mass="8256">MENLNMDLLYMAAAVMMGLAAIGAAIGIGILGGKFLEGAARQPDLIPLLRTQFFIVMGLVDAIPMIAVGLGLYVMFAVA</sequence>